<protein>
    <recommendedName>
        <fullName>Metallothionein A</fullName>
        <shortName>MT-A</shortName>
        <shortName>MT-I</shortName>
    </recommendedName>
</protein>
<name>MTA_GYMAC</name>
<organism>
    <name type="scientific">Gymnodraco acuticeps</name>
    <name type="common">Antarctic dragonfish</name>
    <dbReference type="NCBI Taxonomy" id="8218"/>
    <lineage>
        <taxon>Eukaryota</taxon>
        <taxon>Metazoa</taxon>
        <taxon>Chordata</taxon>
        <taxon>Craniata</taxon>
        <taxon>Vertebrata</taxon>
        <taxon>Euteleostomi</taxon>
        <taxon>Actinopterygii</taxon>
        <taxon>Neopterygii</taxon>
        <taxon>Teleostei</taxon>
        <taxon>Neoteleostei</taxon>
        <taxon>Acanthomorphata</taxon>
        <taxon>Eupercaria</taxon>
        <taxon>Perciformes</taxon>
        <taxon>Notothenioidei</taxon>
        <taxon>Bathydraconidae</taxon>
        <taxon>Gymnodraco</taxon>
    </lineage>
</organism>
<dbReference type="EMBL" id="AJ007560">
    <property type="protein sequence ID" value="CAA07555.1"/>
    <property type="molecule type" value="mRNA"/>
</dbReference>
<dbReference type="SMR" id="P68507"/>
<dbReference type="FunCoup" id="P68507">
    <property type="interactions" value="82"/>
</dbReference>
<dbReference type="InParanoid" id="P68507"/>
<dbReference type="Proteomes" id="UP000515161">
    <property type="component" value="Unplaced"/>
</dbReference>
<dbReference type="GO" id="GO:0046872">
    <property type="term" value="F:metal ion binding"/>
    <property type="evidence" value="ECO:0007669"/>
    <property type="project" value="UniProtKB-KW"/>
</dbReference>
<dbReference type="FunFam" id="4.10.10.10:FF:000001">
    <property type="entry name" value="Metallothionein"/>
    <property type="match status" value="1"/>
</dbReference>
<dbReference type="Gene3D" id="4.10.10.10">
    <property type="entry name" value="Metallothionein Isoform II"/>
    <property type="match status" value="1"/>
</dbReference>
<dbReference type="InterPro" id="IPR017854">
    <property type="entry name" value="Metalthion_dom_sf"/>
</dbReference>
<dbReference type="InterPro" id="IPR023587">
    <property type="entry name" value="Metalthion_dom_sf_vert"/>
</dbReference>
<dbReference type="InterPro" id="IPR000006">
    <property type="entry name" value="Metalthion_vert"/>
</dbReference>
<dbReference type="InterPro" id="IPR018064">
    <property type="entry name" value="Metalthion_vert_metal_BS"/>
</dbReference>
<dbReference type="PANTHER" id="PTHR23299">
    <property type="entry name" value="METALLOTHIONEIN"/>
    <property type="match status" value="1"/>
</dbReference>
<dbReference type="PANTHER" id="PTHR23299:SF24">
    <property type="entry name" value="METALLOTHIONEIN-1X"/>
    <property type="match status" value="1"/>
</dbReference>
<dbReference type="Pfam" id="PF00131">
    <property type="entry name" value="Metallothio"/>
    <property type="match status" value="1"/>
</dbReference>
<dbReference type="PRINTS" id="PR00860">
    <property type="entry name" value="MTVERTEBRATE"/>
</dbReference>
<dbReference type="SUPFAM" id="SSF57868">
    <property type="entry name" value="Metallothionein"/>
    <property type="match status" value="1"/>
</dbReference>
<dbReference type="PROSITE" id="PS00203">
    <property type="entry name" value="METALLOTHIONEIN_VRT"/>
    <property type="match status" value="1"/>
</dbReference>
<comment type="function">
    <text evidence="1">Metallothioneins have a high content of cysteine residues that bind various heavy metals.</text>
</comment>
<comment type="domain">
    <text>Class I metallothioneins contain 2 metal-binding domains: four divalent ions are chelated within cluster A of the alpha domain and are coordinated via cysteinyl thiolate bridges to 11 cysteine ligands. Cluster B, the corresponding region within the beta domain, can ligate three divalent ions to 9 cysteines.</text>
</comment>
<comment type="similarity">
    <text evidence="4">Belongs to the metallothionein superfamily. Type 1 family.</text>
</comment>
<sequence length="60" mass="6005">MDPCDCSKSGTCNCGGSCTCTNCSCKSCKKSCCPCCPSGCTKCASGCVCKGKTCDTSCCQ</sequence>
<feature type="chain" id="PRO_0000197286" description="Metallothionein A">
    <location>
        <begin position="1"/>
        <end position="60"/>
    </location>
</feature>
<feature type="region of interest" description="Beta">
    <location>
        <begin position="1"/>
        <end position="28"/>
    </location>
</feature>
<feature type="region of interest" description="Alpha">
    <location>
        <begin position="29"/>
        <end position="60"/>
    </location>
</feature>
<feature type="binding site" evidence="2">
    <location>
        <position position="4"/>
    </location>
    <ligand>
        <name>a divalent metal cation</name>
        <dbReference type="ChEBI" id="CHEBI:60240"/>
        <label>1</label>
        <note>in cluster B</note>
    </ligand>
</feature>
<feature type="binding site" evidence="2">
    <location>
        <position position="6"/>
    </location>
    <ligand>
        <name>a divalent metal cation</name>
        <dbReference type="ChEBI" id="CHEBI:60240"/>
        <label>1</label>
        <note>in cluster B</note>
    </ligand>
</feature>
<feature type="binding site" evidence="2">
    <location>
        <position position="6"/>
    </location>
    <ligand>
        <name>a divalent metal cation</name>
        <dbReference type="ChEBI" id="CHEBI:60240"/>
        <label>2</label>
        <note>in cluster B</note>
    </ligand>
</feature>
<feature type="binding site" evidence="2">
    <location>
        <position position="12"/>
    </location>
    <ligand>
        <name>a divalent metal cation</name>
        <dbReference type="ChEBI" id="CHEBI:60240"/>
        <label>2</label>
        <note>in cluster B</note>
    </ligand>
</feature>
<feature type="binding site" evidence="2">
    <location>
        <position position="14"/>
    </location>
    <ligand>
        <name>a divalent metal cation</name>
        <dbReference type="ChEBI" id="CHEBI:60240"/>
        <label>2</label>
        <note>in cluster B</note>
    </ligand>
</feature>
<feature type="binding site" evidence="2">
    <location>
        <position position="14"/>
    </location>
    <ligand>
        <name>a divalent metal cation</name>
        <dbReference type="ChEBI" id="CHEBI:60240"/>
        <label>3</label>
        <note>in cluster B</note>
    </ligand>
</feature>
<feature type="binding site" evidence="2">
    <location>
        <position position="18"/>
    </location>
    <ligand>
        <name>a divalent metal cation</name>
        <dbReference type="ChEBI" id="CHEBI:60240"/>
        <label>3</label>
        <note>in cluster B</note>
    </ligand>
</feature>
<feature type="binding site" evidence="2">
    <location>
        <position position="20"/>
    </location>
    <ligand>
        <name>a divalent metal cation</name>
        <dbReference type="ChEBI" id="CHEBI:60240"/>
        <label>1</label>
        <note>in cluster B</note>
    </ligand>
</feature>
<feature type="binding site" evidence="2">
    <location>
        <position position="23"/>
    </location>
    <ligand>
        <name>a divalent metal cation</name>
        <dbReference type="ChEBI" id="CHEBI:60240"/>
        <label>1</label>
        <note>in cluster B</note>
    </ligand>
</feature>
<feature type="binding site" evidence="2">
    <location>
        <position position="23"/>
    </location>
    <ligand>
        <name>a divalent metal cation</name>
        <dbReference type="ChEBI" id="CHEBI:60240"/>
        <label>3</label>
        <note>in cluster B</note>
    </ligand>
</feature>
<feature type="binding site" evidence="2">
    <location>
        <position position="25"/>
    </location>
    <ligand>
        <name>a divalent metal cation</name>
        <dbReference type="ChEBI" id="CHEBI:60240"/>
        <label>2</label>
        <note>in cluster B</note>
    </ligand>
</feature>
<feature type="binding site" evidence="2">
    <location>
        <position position="28"/>
    </location>
    <ligand>
        <name>a divalent metal cation</name>
        <dbReference type="ChEBI" id="CHEBI:60240"/>
        <label>3</label>
        <note>in cluster B</note>
    </ligand>
</feature>
<feature type="binding site" evidence="2">
    <location>
        <position position="32"/>
    </location>
    <ligand>
        <name>a divalent metal cation</name>
        <dbReference type="ChEBI" id="CHEBI:60240"/>
        <label>4</label>
        <note>in cluster A</note>
    </ligand>
</feature>
<feature type="binding site" evidence="2">
    <location>
        <position position="33"/>
    </location>
    <ligand>
        <name>a divalent metal cation</name>
        <dbReference type="ChEBI" id="CHEBI:60240"/>
        <label>4</label>
        <note>in cluster A</note>
    </ligand>
</feature>
<feature type="binding site" evidence="2">
    <location>
        <position position="33"/>
    </location>
    <ligand>
        <name>a divalent metal cation</name>
        <dbReference type="ChEBI" id="CHEBI:60240"/>
        <label>5</label>
        <note>in cluster A</note>
    </ligand>
</feature>
<feature type="binding site" evidence="2">
    <location>
        <position position="35"/>
    </location>
    <ligand>
        <name>a divalent metal cation</name>
        <dbReference type="ChEBI" id="CHEBI:60240"/>
        <label>5</label>
        <note>in cluster A</note>
    </ligand>
</feature>
<feature type="binding site" evidence="2">
    <location>
        <position position="36"/>
    </location>
    <ligand>
        <name>a divalent metal cation</name>
        <dbReference type="ChEBI" id="CHEBI:60240"/>
        <label>5</label>
        <note>in cluster A</note>
    </ligand>
</feature>
<feature type="binding site" evidence="2">
    <location>
        <position position="36"/>
    </location>
    <ligand>
        <name>a divalent metal cation</name>
        <dbReference type="ChEBI" id="CHEBI:60240"/>
        <label>6</label>
        <note>in cluster A</note>
    </ligand>
</feature>
<feature type="binding site" evidence="2">
    <location>
        <position position="40"/>
    </location>
    <ligand>
        <name>a divalent metal cation</name>
        <dbReference type="ChEBI" id="CHEBI:60240"/>
        <label>6</label>
        <note>in cluster A</note>
    </ligand>
</feature>
<feature type="binding site" evidence="2">
    <location>
        <position position="43"/>
    </location>
    <ligand>
        <name>a divalent metal cation</name>
        <dbReference type="ChEBI" id="CHEBI:60240"/>
        <label>4</label>
        <note>in cluster A</note>
    </ligand>
</feature>
<feature type="binding site" evidence="2">
    <location>
        <position position="43"/>
    </location>
    <ligand>
        <name>a divalent metal cation</name>
        <dbReference type="ChEBI" id="CHEBI:60240"/>
        <label>6</label>
        <note>in cluster A</note>
    </ligand>
</feature>
<feature type="binding site" evidence="2">
    <location>
        <position position="47"/>
    </location>
    <ligand>
        <name>a divalent metal cation</name>
        <dbReference type="ChEBI" id="CHEBI:60240"/>
        <label>4</label>
        <note>in cluster A</note>
    </ligand>
</feature>
<feature type="binding site" evidence="2">
    <location>
        <position position="49"/>
    </location>
    <ligand>
        <name>a divalent metal cation</name>
        <dbReference type="ChEBI" id="CHEBI:60240"/>
        <label>5</label>
        <note>in cluster A</note>
    </ligand>
</feature>
<feature type="binding site" evidence="2">
    <location>
        <position position="49"/>
    </location>
    <ligand>
        <name>a divalent metal cation</name>
        <dbReference type="ChEBI" id="CHEBI:60240"/>
        <label>7</label>
        <note>in cluster A</note>
    </ligand>
</feature>
<feature type="binding site" evidence="3">
    <location>
        <position position="54"/>
    </location>
    <ligand>
        <name>a divalent metal cation</name>
        <dbReference type="ChEBI" id="CHEBI:60240"/>
        <label>7</label>
        <note>in cluster A</note>
    </ligand>
</feature>
<feature type="binding site" evidence="2">
    <location>
        <position position="58"/>
    </location>
    <ligand>
        <name>a divalent metal cation</name>
        <dbReference type="ChEBI" id="CHEBI:60240"/>
        <label>7</label>
        <note>in cluster A</note>
    </ligand>
</feature>
<feature type="binding site" evidence="2">
    <location>
        <position position="59"/>
    </location>
    <ligand>
        <name>a divalent metal cation</name>
        <dbReference type="ChEBI" id="CHEBI:60240"/>
        <label>6</label>
        <note>in cluster A</note>
    </ligand>
</feature>
<feature type="binding site" evidence="2">
    <location>
        <position position="59"/>
    </location>
    <ligand>
        <name>a divalent metal cation</name>
        <dbReference type="ChEBI" id="CHEBI:60240"/>
        <label>7</label>
        <note>in cluster A</note>
    </ligand>
</feature>
<evidence type="ECO:0000250" key="1"/>
<evidence type="ECO:0000250" key="2">
    <source>
        <dbReference type="UniProtKB" id="P02795"/>
    </source>
</evidence>
<evidence type="ECO:0000250" key="3">
    <source>
        <dbReference type="UniProtKB" id="P62339"/>
    </source>
</evidence>
<evidence type="ECO:0000305" key="4"/>
<proteinExistence type="inferred from homology"/>
<gene>
    <name type="primary">mta</name>
</gene>
<reference key="1">
    <citation type="journal article" date="1999" name="Mol. Biol. Evol.">
        <title>Metallothioneins in antarctic fish: evidence for independent duplication and gene conversion.</title>
        <authorList>
            <person name="Bargelloni L."/>
            <person name="Scudiero R."/>
            <person name="Parisi E."/>
            <person name="Carginale V."/>
            <person name="Capasso C."/>
            <person name="Patarnello T."/>
        </authorList>
    </citation>
    <scope>NUCLEOTIDE SEQUENCE [MRNA]</scope>
    <source>
        <tissue>Liver</tissue>
    </source>
</reference>
<keyword id="KW-0479">Metal-binding</keyword>
<keyword id="KW-0480">Metal-thiolate cluster</keyword>
<keyword id="KW-1185">Reference proteome</keyword>
<keyword id="KW-0862">Zinc</keyword>
<accession>P68507</accession>
<accession>O13258</accession>